<keyword id="KW-0997">Cell inner membrane</keyword>
<keyword id="KW-1003">Cell membrane</keyword>
<keyword id="KW-0350">Heme biosynthesis</keyword>
<keyword id="KW-0472">Membrane</keyword>
<keyword id="KW-1185">Reference proteome</keyword>
<keyword id="KW-0808">Transferase</keyword>
<keyword id="KW-0812">Transmembrane</keyword>
<keyword id="KW-1133">Transmembrane helix</keyword>
<organism>
    <name type="scientific">Leptothrix cholodnii (strain ATCC 51168 / LMG 8142 / SP-6)</name>
    <name type="common">Leptothrix discophora (strain SP-6)</name>
    <dbReference type="NCBI Taxonomy" id="395495"/>
    <lineage>
        <taxon>Bacteria</taxon>
        <taxon>Pseudomonadati</taxon>
        <taxon>Pseudomonadota</taxon>
        <taxon>Betaproteobacteria</taxon>
        <taxon>Burkholderiales</taxon>
        <taxon>Sphaerotilaceae</taxon>
        <taxon>Leptothrix</taxon>
    </lineage>
</organism>
<comment type="function">
    <text evidence="1">Converts heme B (protoheme IX) to heme O by substitution of the vinyl group on carbon 2 of heme B porphyrin ring with a hydroxyethyl farnesyl side group.</text>
</comment>
<comment type="catalytic activity">
    <reaction evidence="1">
        <text>heme b + (2E,6E)-farnesyl diphosphate + H2O = Fe(II)-heme o + diphosphate</text>
        <dbReference type="Rhea" id="RHEA:28070"/>
        <dbReference type="ChEBI" id="CHEBI:15377"/>
        <dbReference type="ChEBI" id="CHEBI:33019"/>
        <dbReference type="ChEBI" id="CHEBI:60344"/>
        <dbReference type="ChEBI" id="CHEBI:60530"/>
        <dbReference type="ChEBI" id="CHEBI:175763"/>
        <dbReference type="EC" id="2.5.1.141"/>
    </reaction>
</comment>
<comment type="pathway">
    <text evidence="1">Porphyrin-containing compound metabolism; heme O biosynthesis; heme O from protoheme: step 1/1.</text>
</comment>
<comment type="subcellular location">
    <subcellularLocation>
        <location evidence="1">Cell inner membrane</location>
        <topology evidence="1">Multi-pass membrane protein</topology>
    </subcellularLocation>
</comment>
<comment type="miscellaneous">
    <text evidence="1">Carbon 2 of the heme B porphyrin ring is defined according to the Fischer nomenclature.</text>
</comment>
<comment type="similarity">
    <text evidence="1">Belongs to the UbiA prenyltransferase family. Protoheme IX farnesyltransferase subfamily.</text>
</comment>
<reference key="1">
    <citation type="submission" date="2008-03" db="EMBL/GenBank/DDBJ databases">
        <title>Complete sequence of Leptothrix cholodnii SP-6.</title>
        <authorList>
            <consortium name="US DOE Joint Genome Institute"/>
            <person name="Copeland A."/>
            <person name="Lucas S."/>
            <person name="Lapidus A."/>
            <person name="Glavina del Rio T."/>
            <person name="Dalin E."/>
            <person name="Tice H."/>
            <person name="Bruce D."/>
            <person name="Goodwin L."/>
            <person name="Pitluck S."/>
            <person name="Chertkov O."/>
            <person name="Brettin T."/>
            <person name="Detter J.C."/>
            <person name="Han C."/>
            <person name="Kuske C.R."/>
            <person name="Schmutz J."/>
            <person name="Larimer F."/>
            <person name="Land M."/>
            <person name="Hauser L."/>
            <person name="Kyrpides N."/>
            <person name="Lykidis A."/>
            <person name="Emerson D."/>
            <person name="Richardson P."/>
        </authorList>
    </citation>
    <scope>NUCLEOTIDE SEQUENCE [LARGE SCALE GENOMIC DNA]</scope>
    <source>
        <strain>ATCC 51168 / LMG 8142 / SP-6</strain>
    </source>
</reference>
<dbReference type="EC" id="2.5.1.141" evidence="1"/>
<dbReference type="EMBL" id="CP001013">
    <property type="protein sequence ID" value="ACB36082.1"/>
    <property type="molecule type" value="Genomic_DNA"/>
</dbReference>
<dbReference type="RefSeq" id="WP_012348829.1">
    <property type="nucleotide sequence ID" value="NC_010524.1"/>
</dbReference>
<dbReference type="SMR" id="B1Y6Q4"/>
<dbReference type="STRING" id="395495.Lcho_3828"/>
<dbReference type="KEGG" id="lch:Lcho_3828"/>
<dbReference type="eggNOG" id="COG0109">
    <property type="taxonomic scope" value="Bacteria"/>
</dbReference>
<dbReference type="HOGENOM" id="CLU_029631_0_2_4"/>
<dbReference type="OrthoDB" id="9814417at2"/>
<dbReference type="UniPathway" id="UPA00834">
    <property type="reaction ID" value="UER00712"/>
</dbReference>
<dbReference type="Proteomes" id="UP000001693">
    <property type="component" value="Chromosome"/>
</dbReference>
<dbReference type="GO" id="GO:0005886">
    <property type="term" value="C:plasma membrane"/>
    <property type="evidence" value="ECO:0007669"/>
    <property type="project" value="UniProtKB-SubCell"/>
</dbReference>
<dbReference type="GO" id="GO:0008495">
    <property type="term" value="F:protoheme IX farnesyltransferase activity"/>
    <property type="evidence" value="ECO:0007669"/>
    <property type="project" value="UniProtKB-UniRule"/>
</dbReference>
<dbReference type="GO" id="GO:0048034">
    <property type="term" value="P:heme O biosynthetic process"/>
    <property type="evidence" value="ECO:0007669"/>
    <property type="project" value="UniProtKB-UniRule"/>
</dbReference>
<dbReference type="CDD" id="cd13957">
    <property type="entry name" value="PT_UbiA_Cox10"/>
    <property type="match status" value="1"/>
</dbReference>
<dbReference type="Gene3D" id="1.10.357.140">
    <property type="entry name" value="UbiA prenyltransferase"/>
    <property type="match status" value="1"/>
</dbReference>
<dbReference type="HAMAP" id="MF_00154">
    <property type="entry name" value="CyoE_CtaB"/>
    <property type="match status" value="1"/>
</dbReference>
<dbReference type="InterPro" id="IPR006369">
    <property type="entry name" value="Protohaem_IX_farnesylTrfase"/>
</dbReference>
<dbReference type="InterPro" id="IPR000537">
    <property type="entry name" value="UbiA_prenyltransferase"/>
</dbReference>
<dbReference type="InterPro" id="IPR030470">
    <property type="entry name" value="UbiA_prenylTrfase_CS"/>
</dbReference>
<dbReference type="InterPro" id="IPR044878">
    <property type="entry name" value="UbiA_sf"/>
</dbReference>
<dbReference type="NCBIfam" id="TIGR01473">
    <property type="entry name" value="cyoE_ctaB"/>
    <property type="match status" value="1"/>
</dbReference>
<dbReference type="NCBIfam" id="NF003349">
    <property type="entry name" value="PRK04375.1-2"/>
    <property type="match status" value="1"/>
</dbReference>
<dbReference type="PANTHER" id="PTHR43448:SF7">
    <property type="entry name" value="4-HYDROXYBENZOATE SOLANESYLTRANSFERASE"/>
    <property type="match status" value="1"/>
</dbReference>
<dbReference type="PANTHER" id="PTHR43448">
    <property type="entry name" value="PROTOHEME IX FARNESYLTRANSFERASE, MITOCHONDRIAL"/>
    <property type="match status" value="1"/>
</dbReference>
<dbReference type="Pfam" id="PF01040">
    <property type="entry name" value="UbiA"/>
    <property type="match status" value="1"/>
</dbReference>
<dbReference type="PROSITE" id="PS00943">
    <property type="entry name" value="UBIA"/>
    <property type="match status" value="1"/>
</dbReference>
<evidence type="ECO:0000255" key="1">
    <source>
        <dbReference type="HAMAP-Rule" id="MF_00154"/>
    </source>
</evidence>
<accession>B1Y6Q4</accession>
<proteinExistence type="inferred from homology"/>
<name>COXX_LEPCP</name>
<gene>
    <name evidence="1" type="primary">ctaB</name>
    <name type="ordered locus">Lcho_3828</name>
</gene>
<feature type="chain" id="PRO_0000346054" description="Protoheme IX farnesyltransferase">
    <location>
        <begin position="1"/>
        <end position="305"/>
    </location>
</feature>
<feature type="transmembrane region" description="Helical" evidence="1">
    <location>
        <begin position="29"/>
        <end position="49"/>
    </location>
</feature>
<feature type="transmembrane region" description="Helical" evidence="1">
    <location>
        <begin position="55"/>
        <end position="75"/>
    </location>
</feature>
<feature type="transmembrane region" description="Helical" evidence="1">
    <location>
        <begin position="101"/>
        <end position="121"/>
    </location>
</feature>
<feature type="transmembrane region" description="Helical" evidence="1">
    <location>
        <begin position="123"/>
        <end position="143"/>
    </location>
</feature>
<feature type="transmembrane region" description="Helical" evidence="1">
    <location>
        <begin position="151"/>
        <end position="171"/>
    </location>
</feature>
<feature type="transmembrane region" description="Helical" evidence="1">
    <location>
        <begin position="177"/>
        <end position="197"/>
    </location>
</feature>
<feature type="transmembrane region" description="Helical" evidence="1">
    <location>
        <begin position="219"/>
        <end position="241"/>
    </location>
</feature>
<feature type="transmembrane region" description="Helical" evidence="1">
    <location>
        <begin position="246"/>
        <end position="268"/>
    </location>
</feature>
<feature type="transmembrane region" description="Helical" evidence="1">
    <location>
        <begin position="283"/>
        <end position="303"/>
    </location>
</feature>
<sequence>MNAPSSAAGHVSSHWRQYVALTKPRVVQLIVFCAAIGMLLAVPGAPGLADLGKALWATLGIWLVASAAAAFNCLIEQQIDSRMKRTAWRPTARGELSRTQALIFSAVLCSAGMAVLHEAVNPLTAWLTLGTFVGYAVIYTVVLKPLTPQNIVIGGISGAMPPLLGWAAMTGEVGPEGLILCLIIFLWTPPHFWALALYRAEDYARAGLPMLPVTHGNEFTRLQILLYTFVLLAGTLLPFVQGMSGWLYLAAAFVLGLRFIHYAWRLWRNYSEALARQTFRFSIWHLSLLFAALLVDHYTQDLLTL</sequence>
<protein>
    <recommendedName>
        <fullName evidence="1">Protoheme IX farnesyltransferase</fullName>
        <ecNumber evidence="1">2.5.1.141</ecNumber>
    </recommendedName>
    <alternativeName>
        <fullName evidence="1">Heme B farnesyltransferase</fullName>
    </alternativeName>
    <alternativeName>
        <fullName evidence="1">Heme O synthase</fullName>
    </alternativeName>
</protein>